<organismHost>
    <name type="scientific">Homo sapiens</name>
    <name type="common">Human</name>
    <dbReference type="NCBI Taxonomy" id="9606"/>
</organismHost>
<feature type="chain" id="PRO_0000448100" description="Ankyrin repeat protein OPG189">
    <location>
        <begin position="1"/>
        <end position="558"/>
    </location>
</feature>
<feature type="repeat" description="ANK 1">
    <location>
        <begin position="65"/>
        <end position="95"/>
    </location>
</feature>
<feature type="repeat" description="ANK 2">
    <location>
        <begin position="169"/>
        <end position="205"/>
    </location>
</feature>
<feature type="repeat" description="ANK 3">
    <location>
        <begin position="209"/>
        <end position="239"/>
    </location>
</feature>
<feature type="repeat" description="ANK 4">
    <location>
        <begin position="243"/>
        <end position="272"/>
    </location>
</feature>
<feature type="repeat" description="ANK 5">
    <location>
        <begin position="276"/>
        <end position="304"/>
    </location>
</feature>
<feature type="repeat" description="ANK 6">
    <location>
        <begin position="339"/>
        <end position="368"/>
    </location>
</feature>
<feature type="repeat" description="ANK 7">
    <location>
        <begin position="372"/>
        <end position="401"/>
    </location>
</feature>
<name>PG189_VARV</name>
<evidence type="ECO:0000250" key="1">
    <source>
        <dbReference type="UniProtKB" id="P24769"/>
    </source>
</evidence>
<evidence type="ECO:0000305" key="2"/>
<reference key="1">
    <citation type="journal article" date="1993" name="Nature">
        <title>Potential virulence determinants in terminal regions of variola smallpox virus genome.</title>
        <authorList>
            <person name="Massung R.F."/>
            <person name="Esposito J.J."/>
            <person name="Liu L.I."/>
            <person name="Qi J."/>
            <person name="Utterback T.R."/>
            <person name="Knight J.C."/>
            <person name="Aubin L."/>
            <person name="Yuran T.E."/>
            <person name="Parsons J.M."/>
            <person name="Loparev V.N."/>
            <person name="Selivanov N.A."/>
            <person name="Cavallaro K.F."/>
            <person name="Kerlavage A.R."/>
            <person name="Mahy B.W.J."/>
            <person name="Venter J.C."/>
        </authorList>
    </citation>
    <scope>NUCLEOTIDE SEQUENCE [GENOMIC DNA]</scope>
    <source>
        <strain>Bangladesh-1975</strain>
    </source>
</reference>
<accession>P0DST0</accession>
<accession>P33823</accession>
<proteinExistence type="inferred from homology"/>
<dbReference type="EMBL" id="L22579">
    <property type="protein sequence ID" value="AAA60914.1"/>
    <property type="molecule type" value="Genomic_DNA"/>
</dbReference>
<dbReference type="PIR" id="T28604">
    <property type="entry name" value="T28604"/>
</dbReference>
<dbReference type="RefSeq" id="NP_042218.1">
    <property type="nucleotide sequence ID" value="NC_001611.1"/>
</dbReference>
<dbReference type="SMR" id="P0DST0"/>
<dbReference type="GeneID" id="1486562"/>
<dbReference type="KEGG" id="vg:1486562"/>
<dbReference type="Proteomes" id="UP000119805">
    <property type="component" value="Segment"/>
</dbReference>
<dbReference type="Gene3D" id="1.25.40.20">
    <property type="entry name" value="Ankyrin repeat-containing domain"/>
    <property type="match status" value="2"/>
</dbReference>
<dbReference type="InterPro" id="IPR002110">
    <property type="entry name" value="Ankyrin_rpt"/>
</dbReference>
<dbReference type="InterPro" id="IPR036770">
    <property type="entry name" value="Ankyrin_rpt-contain_sf"/>
</dbReference>
<dbReference type="InterPro" id="IPR018272">
    <property type="entry name" value="PRANC_domain"/>
</dbReference>
<dbReference type="PANTHER" id="PTHR24126:SF14">
    <property type="entry name" value="ANK_REP_REGION DOMAIN-CONTAINING PROTEIN"/>
    <property type="match status" value="1"/>
</dbReference>
<dbReference type="PANTHER" id="PTHR24126">
    <property type="entry name" value="ANKYRIN REPEAT, PH AND SEC7 DOMAIN CONTAINING PROTEIN SECG-RELATED"/>
    <property type="match status" value="1"/>
</dbReference>
<dbReference type="Pfam" id="PF12796">
    <property type="entry name" value="Ank_2"/>
    <property type="match status" value="1"/>
</dbReference>
<dbReference type="Pfam" id="PF09372">
    <property type="entry name" value="PRANC"/>
    <property type="match status" value="1"/>
</dbReference>
<dbReference type="SMART" id="SM00248">
    <property type="entry name" value="ANK"/>
    <property type="match status" value="7"/>
</dbReference>
<dbReference type="SUPFAM" id="SSF48403">
    <property type="entry name" value="Ankyrin repeat"/>
    <property type="match status" value="1"/>
</dbReference>
<dbReference type="PROSITE" id="PS50297">
    <property type="entry name" value="ANK_REP_REGION"/>
    <property type="match status" value="1"/>
</dbReference>
<dbReference type="PROSITE" id="PS50088">
    <property type="entry name" value="ANK_REPEAT"/>
    <property type="match status" value="1"/>
</dbReference>
<protein>
    <recommendedName>
        <fullName>Ankyrin repeat protein OPG189</fullName>
    </recommendedName>
</protein>
<comment type="function">
    <text evidence="1">Contributes to viral release without involving rearrangement of host actin.</text>
</comment>
<comment type="similarity">
    <text evidence="2">Belongs to the orthopoxvirus OPG189 protein family.</text>
</comment>
<keyword id="KW-0040">ANK repeat</keyword>
<keyword id="KW-0677">Repeat</keyword>
<gene>
    <name type="primary">OPG189</name>
    <name type="ORF">B4R</name>
    <name type="ORF">B5R</name>
    <name type="ORF">B6R</name>
</gene>
<organism>
    <name type="scientific">Variola virus</name>
    <dbReference type="NCBI Taxonomy" id="10255"/>
    <lineage>
        <taxon>Viruses</taxon>
        <taxon>Varidnaviria</taxon>
        <taxon>Bamfordvirae</taxon>
        <taxon>Nucleocytoviricota</taxon>
        <taxon>Pokkesviricetes</taxon>
        <taxon>Chitovirales</taxon>
        <taxon>Poxviridae</taxon>
        <taxon>Chordopoxvirinae</taxon>
        <taxon>Orthopoxvirus</taxon>
    </lineage>
</organism>
<sequence>MDFFKKEILDWSIYLSLHYIAHACSNSSTSHIIQEYNLIRTYKKVDKTIVDFLSRWPNLFHILEYGENILHIYSMDDANTNIIIFFLDNVLNINKNGSFIHNLGLSSSINIKEYVYQLVNNDHLDNGIRLMLENGRRTRHFLSYILDTVNIYICILINHGFYIDAVDSYGCTLLHRCIYHYKKSESESYNELIKILLNNGSDVDKKDTHGNTPFILLCKHDIDNVELFEICLENANIDSVDFNGYTPLHYVSCRNKYDFVKSLISKGANVNTRNRFGTTPFYCGIIHGISLIKLYLESDTELEIDNEHIVRHLIIFDAVESLDYLLFRGVIDINYRTIYNETSIYDAVSYNAYNMLVYLLNRNGDFETITTSGCTCISKAVANNNKIIMEVLLSKQPSLKIMILSIIAITKHKQHNTNLLKMCIKYTACMTDYDTLIDVQSLQQYKWYILKCFDEIDIMKRCYIKNKTVFQLVFCTKDINTLMRYGRHPSFVKYTSLDVYGSRVRNIIASIRYRQRLISLLSKKLDVGDKWACFPNEIKYKILENFNDNELSTYLKIL</sequence>